<feature type="chain" id="PRO_1000049130" description="Homoserine kinase">
    <location>
        <begin position="1"/>
        <end position="310"/>
    </location>
</feature>
<feature type="binding site" evidence="1">
    <location>
        <begin position="91"/>
        <end position="101"/>
    </location>
    <ligand>
        <name>ATP</name>
        <dbReference type="ChEBI" id="CHEBI:30616"/>
    </ligand>
</feature>
<gene>
    <name evidence="1" type="primary">thrB</name>
    <name type="ordered locus">ECP_0003</name>
</gene>
<accession>Q0TLY6</accession>
<name>KHSE_ECOL5</name>
<reference key="1">
    <citation type="journal article" date="2006" name="Mol. Microbiol.">
        <title>Role of pathogenicity island-associated integrases in the genome plasticity of uropathogenic Escherichia coli strain 536.</title>
        <authorList>
            <person name="Hochhut B."/>
            <person name="Wilde C."/>
            <person name="Balling G."/>
            <person name="Middendorf B."/>
            <person name="Dobrindt U."/>
            <person name="Brzuszkiewicz E."/>
            <person name="Gottschalk G."/>
            <person name="Carniel E."/>
            <person name="Hacker J."/>
        </authorList>
    </citation>
    <scope>NUCLEOTIDE SEQUENCE [LARGE SCALE GENOMIC DNA]</scope>
    <source>
        <strain>536 / UPEC</strain>
    </source>
</reference>
<comment type="function">
    <text evidence="1">Catalyzes the ATP-dependent phosphorylation of L-homoserine to L-homoserine phosphate.</text>
</comment>
<comment type="catalytic activity">
    <reaction evidence="1">
        <text>L-homoserine + ATP = O-phospho-L-homoserine + ADP + H(+)</text>
        <dbReference type="Rhea" id="RHEA:13985"/>
        <dbReference type="ChEBI" id="CHEBI:15378"/>
        <dbReference type="ChEBI" id="CHEBI:30616"/>
        <dbReference type="ChEBI" id="CHEBI:57476"/>
        <dbReference type="ChEBI" id="CHEBI:57590"/>
        <dbReference type="ChEBI" id="CHEBI:456216"/>
        <dbReference type="EC" id="2.7.1.39"/>
    </reaction>
</comment>
<comment type="pathway">
    <text evidence="1">Amino-acid biosynthesis; L-threonine biosynthesis; L-threonine from L-aspartate: step 4/5.</text>
</comment>
<comment type="subcellular location">
    <subcellularLocation>
        <location evidence="1">Cytoplasm</location>
    </subcellularLocation>
</comment>
<comment type="similarity">
    <text evidence="1">Belongs to the GHMP kinase family. Homoserine kinase subfamily.</text>
</comment>
<protein>
    <recommendedName>
        <fullName evidence="1">Homoserine kinase</fullName>
        <shortName evidence="1">HK</shortName>
        <shortName evidence="1">HSK</shortName>
        <ecNumber evidence="1">2.7.1.39</ecNumber>
    </recommendedName>
</protein>
<keyword id="KW-0028">Amino-acid biosynthesis</keyword>
<keyword id="KW-0067">ATP-binding</keyword>
<keyword id="KW-0963">Cytoplasm</keyword>
<keyword id="KW-0418">Kinase</keyword>
<keyword id="KW-0547">Nucleotide-binding</keyword>
<keyword id="KW-0791">Threonine biosynthesis</keyword>
<keyword id="KW-0808">Transferase</keyword>
<dbReference type="EC" id="2.7.1.39" evidence="1"/>
<dbReference type="EMBL" id="CP000247">
    <property type="protein sequence ID" value="ABG68045.1"/>
    <property type="molecule type" value="Genomic_DNA"/>
</dbReference>
<dbReference type="RefSeq" id="WP_000241654.1">
    <property type="nucleotide sequence ID" value="NC_008253.1"/>
</dbReference>
<dbReference type="SMR" id="Q0TLY6"/>
<dbReference type="KEGG" id="ecp:ECP_0003"/>
<dbReference type="HOGENOM" id="CLU_041243_1_1_6"/>
<dbReference type="UniPathway" id="UPA00050">
    <property type="reaction ID" value="UER00064"/>
</dbReference>
<dbReference type="Proteomes" id="UP000009182">
    <property type="component" value="Chromosome"/>
</dbReference>
<dbReference type="GO" id="GO:0005737">
    <property type="term" value="C:cytoplasm"/>
    <property type="evidence" value="ECO:0007669"/>
    <property type="project" value="UniProtKB-SubCell"/>
</dbReference>
<dbReference type="GO" id="GO:0005524">
    <property type="term" value="F:ATP binding"/>
    <property type="evidence" value="ECO:0007669"/>
    <property type="project" value="UniProtKB-UniRule"/>
</dbReference>
<dbReference type="GO" id="GO:0004413">
    <property type="term" value="F:homoserine kinase activity"/>
    <property type="evidence" value="ECO:0007669"/>
    <property type="project" value="UniProtKB-UniRule"/>
</dbReference>
<dbReference type="GO" id="GO:0009088">
    <property type="term" value="P:threonine biosynthetic process"/>
    <property type="evidence" value="ECO:0007669"/>
    <property type="project" value="UniProtKB-UniRule"/>
</dbReference>
<dbReference type="FunFam" id="3.30.230.10:FF:000020">
    <property type="entry name" value="Homoserine kinase"/>
    <property type="match status" value="1"/>
</dbReference>
<dbReference type="FunFam" id="3.30.70.890:FF:000002">
    <property type="entry name" value="Homoserine kinase"/>
    <property type="match status" value="1"/>
</dbReference>
<dbReference type="Gene3D" id="3.30.230.10">
    <property type="match status" value="1"/>
</dbReference>
<dbReference type="Gene3D" id="3.30.70.890">
    <property type="entry name" value="GHMP kinase, C-terminal domain"/>
    <property type="match status" value="1"/>
</dbReference>
<dbReference type="HAMAP" id="MF_00384">
    <property type="entry name" value="Homoser_kinase"/>
    <property type="match status" value="1"/>
</dbReference>
<dbReference type="InterPro" id="IPR013750">
    <property type="entry name" value="GHMP_kinase_C_dom"/>
</dbReference>
<dbReference type="InterPro" id="IPR036554">
    <property type="entry name" value="GHMP_kinase_C_sf"/>
</dbReference>
<dbReference type="InterPro" id="IPR006204">
    <property type="entry name" value="GHMP_kinase_N_dom"/>
</dbReference>
<dbReference type="InterPro" id="IPR006203">
    <property type="entry name" value="GHMP_knse_ATP-bd_CS"/>
</dbReference>
<dbReference type="InterPro" id="IPR000870">
    <property type="entry name" value="Homoserine_kinase"/>
</dbReference>
<dbReference type="InterPro" id="IPR020568">
    <property type="entry name" value="Ribosomal_Su5_D2-typ_SF"/>
</dbReference>
<dbReference type="InterPro" id="IPR014721">
    <property type="entry name" value="Ribsml_uS5_D2-typ_fold_subgr"/>
</dbReference>
<dbReference type="NCBIfam" id="NF002288">
    <property type="entry name" value="PRK01212.1-4"/>
    <property type="match status" value="1"/>
</dbReference>
<dbReference type="NCBIfam" id="TIGR00191">
    <property type="entry name" value="thrB"/>
    <property type="match status" value="1"/>
</dbReference>
<dbReference type="PANTHER" id="PTHR20861:SF1">
    <property type="entry name" value="HOMOSERINE KINASE"/>
    <property type="match status" value="1"/>
</dbReference>
<dbReference type="PANTHER" id="PTHR20861">
    <property type="entry name" value="HOMOSERINE/4-DIPHOSPHOCYTIDYL-2-C-METHYL-D-ERYTHRITOL KINASE"/>
    <property type="match status" value="1"/>
</dbReference>
<dbReference type="Pfam" id="PF08544">
    <property type="entry name" value="GHMP_kinases_C"/>
    <property type="match status" value="1"/>
</dbReference>
<dbReference type="Pfam" id="PF00288">
    <property type="entry name" value="GHMP_kinases_N"/>
    <property type="match status" value="1"/>
</dbReference>
<dbReference type="PIRSF" id="PIRSF000676">
    <property type="entry name" value="Homoser_kin"/>
    <property type="match status" value="1"/>
</dbReference>
<dbReference type="PRINTS" id="PR00958">
    <property type="entry name" value="HOMSERKINASE"/>
</dbReference>
<dbReference type="SUPFAM" id="SSF55060">
    <property type="entry name" value="GHMP Kinase, C-terminal domain"/>
    <property type="match status" value="1"/>
</dbReference>
<dbReference type="SUPFAM" id="SSF54211">
    <property type="entry name" value="Ribosomal protein S5 domain 2-like"/>
    <property type="match status" value="1"/>
</dbReference>
<dbReference type="PROSITE" id="PS00627">
    <property type="entry name" value="GHMP_KINASES_ATP"/>
    <property type="match status" value="1"/>
</dbReference>
<proteinExistence type="inferred from homology"/>
<sequence length="310" mass="33626">MVKVYAPASSANMSVGFDVLGAAVTPVDGALLGDVVTVEAAETFSLNNLGRFADKLPSEPRENIVYQCWERFCQELGKQIPVAMTLEKNMPIGSGLGSSACSVVAALMAMNEHCGKPLNDTRLLALMGELEGRISGSIHYDNVAPCFLGGMQLMIEENDIISQQVPGFDEWLWVLAYPGIKVSTAEARAILPAQYRRQDCIAHGRHLAGFIHACYSRQLELAAKLMKDVIAEPYRERLLPGFRQARQAVAEIGAVASGISGSGPTLFALCDKPDTAQRVADWLGKNYLQNQEGFVHICRLDTAGARVLEN</sequence>
<organism>
    <name type="scientific">Escherichia coli O6:K15:H31 (strain 536 / UPEC)</name>
    <dbReference type="NCBI Taxonomy" id="362663"/>
    <lineage>
        <taxon>Bacteria</taxon>
        <taxon>Pseudomonadati</taxon>
        <taxon>Pseudomonadota</taxon>
        <taxon>Gammaproteobacteria</taxon>
        <taxon>Enterobacterales</taxon>
        <taxon>Enterobacteriaceae</taxon>
        <taxon>Escherichia</taxon>
    </lineage>
</organism>
<evidence type="ECO:0000255" key="1">
    <source>
        <dbReference type="HAMAP-Rule" id="MF_00384"/>
    </source>
</evidence>